<keyword id="KW-0010">Activator</keyword>
<keyword id="KW-0539">Nucleus</keyword>
<keyword id="KW-1185">Reference proteome</keyword>
<keyword id="KW-0804">Transcription</keyword>
<keyword id="KW-0805">Transcription regulation</keyword>
<protein>
    <recommendedName>
        <fullName>Growth-regulating factor 3</fullName>
        <shortName>OsGRF3</shortName>
    </recommendedName>
    <alternativeName>
        <fullName>Transcription activator GRF3</fullName>
    </alternativeName>
</protein>
<accession>Q6AWY6</accession>
<accession>Q0JAG0</accession>
<accession>Q7X7T1</accession>
<reference key="1">
    <citation type="journal article" date="2002" name="Nature">
        <title>Sequence and analysis of rice chromosome 4.</title>
        <authorList>
            <person name="Feng Q."/>
            <person name="Zhang Y."/>
            <person name="Hao P."/>
            <person name="Wang S."/>
            <person name="Fu G."/>
            <person name="Huang Y."/>
            <person name="Li Y."/>
            <person name="Zhu J."/>
            <person name="Liu Y."/>
            <person name="Hu X."/>
            <person name="Jia P."/>
            <person name="Zhang Y."/>
            <person name="Zhao Q."/>
            <person name="Ying K."/>
            <person name="Yu S."/>
            <person name="Tang Y."/>
            <person name="Weng Q."/>
            <person name="Zhang L."/>
            <person name="Lu Y."/>
            <person name="Mu J."/>
            <person name="Lu Y."/>
            <person name="Zhang L.S."/>
            <person name="Yu Z."/>
            <person name="Fan D."/>
            <person name="Liu X."/>
            <person name="Lu T."/>
            <person name="Li C."/>
            <person name="Wu Y."/>
            <person name="Sun T."/>
            <person name="Lei H."/>
            <person name="Li T."/>
            <person name="Hu H."/>
            <person name="Guan J."/>
            <person name="Wu M."/>
            <person name="Zhang R."/>
            <person name="Zhou B."/>
            <person name="Chen Z."/>
            <person name="Chen L."/>
            <person name="Jin Z."/>
            <person name="Wang R."/>
            <person name="Yin H."/>
            <person name="Cai Z."/>
            <person name="Ren S."/>
            <person name="Lv G."/>
            <person name="Gu W."/>
            <person name="Zhu G."/>
            <person name="Tu Y."/>
            <person name="Jia J."/>
            <person name="Zhang Y."/>
            <person name="Chen J."/>
            <person name="Kang H."/>
            <person name="Chen X."/>
            <person name="Shao C."/>
            <person name="Sun Y."/>
            <person name="Hu Q."/>
            <person name="Zhang X."/>
            <person name="Zhang W."/>
            <person name="Wang L."/>
            <person name="Ding C."/>
            <person name="Sheng H."/>
            <person name="Gu J."/>
            <person name="Chen S."/>
            <person name="Ni L."/>
            <person name="Zhu F."/>
            <person name="Chen W."/>
            <person name="Lan L."/>
            <person name="Lai Y."/>
            <person name="Cheng Z."/>
            <person name="Gu M."/>
            <person name="Jiang J."/>
            <person name="Li J."/>
            <person name="Hong G."/>
            <person name="Xue Y."/>
            <person name="Han B."/>
        </authorList>
    </citation>
    <scope>NUCLEOTIDE SEQUENCE [LARGE SCALE GENOMIC DNA]</scope>
    <source>
        <strain>cv. Nipponbare</strain>
    </source>
</reference>
<reference key="2">
    <citation type="journal article" date="2005" name="Nature">
        <title>The map-based sequence of the rice genome.</title>
        <authorList>
            <consortium name="International rice genome sequencing project (IRGSP)"/>
        </authorList>
    </citation>
    <scope>NUCLEOTIDE SEQUENCE [LARGE SCALE GENOMIC DNA]</scope>
    <source>
        <strain>cv. Nipponbare</strain>
    </source>
</reference>
<reference key="3">
    <citation type="journal article" date="2008" name="Nucleic Acids Res.">
        <title>The rice annotation project database (RAP-DB): 2008 update.</title>
        <authorList>
            <consortium name="The rice annotation project (RAP)"/>
        </authorList>
    </citation>
    <scope>GENOME REANNOTATION</scope>
    <source>
        <strain>cv. Nipponbare</strain>
    </source>
</reference>
<reference key="4">
    <citation type="journal article" date="2013" name="Rice">
        <title>Improvement of the Oryza sativa Nipponbare reference genome using next generation sequence and optical map data.</title>
        <authorList>
            <person name="Kawahara Y."/>
            <person name="de la Bastide M."/>
            <person name="Hamilton J.P."/>
            <person name="Kanamori H."/>
            <person name="McCombie W.R."/>
            <person name="Ouyang S."/>
            <person name="Schwartz D.C."/>
            <person name="Tanaka T."/>
            <person name="Wu J."/>
            <person name="Zhou S."/>
            <person name="Childs K.L."/>
            <person name="Davidson R.M."/>
            <person name="Lin H."/>
            <person name="Quesada-Ocampo L."/>
            <person name="Vaillancourt B."/>
            <person name="Sakai H."/>
            <person name="Lee S.S."/>
            <person name="Kim J."/>
            <person name="Numa H."/>
            <person name="Itoh T."/>
            <person name="Buell C.R."/>
            <person name="Matsumoto T."/>
        </authorList>
    </citation>
    <scope>GENOME REANNOTATION</scope>
    <source>
        <strain>cv. Nipponbare</strain>
    </source>
</reference>
<reference key="5">
    <citation type="journal article" date="2005" name="PLoS Biol.">
        <title>The genomes of Oryza sativa: a history of duplications.</title>
        <authorList>
            <person name="Yu J."/>
            <person name="Wang J."/>
            <person name="Lin W."/>
            <person name="Li S."/>
            <person name="Li H."/>
            <person name="Zhou J."/>
            <person name="Ni P."/>
            <person name="Dong W."/>
            <person name="Hu S."/>
            <person name="Zeng C."/>
            <person name="Zhang J."/>
            <person name="Zhang Y."/>
            <person name="Li R."/>
            <person name="Xu Z."/>
            <person name="Li S."/>
            <person name="Li X."/>
            <person name="Zheng H."/>
            <person name="Cong L."/>
            <person name="Lin L."/>
            <person name="Yin J."/>
            <person name="Geng J."/>
            <person name="Li G."/>
            <person name="Shi J."/>
            <person name="Liu J."/>
            <person name="Lv H."/>
            <person name="Li J."/>
            <person name="Wang J."/>
            <person name="Deng Y."/>
            <person name="Ran L."/>
            <person name="Shi X."/>
            <person name="Wang X."/>
            <person name="Wu Q."/>
            <person name="Li C."/>
            <person name="Ren X."/>
            <person name="Wang J."/>
            <person name="Wang X."/>
            <person name="Li D."/>
            <person name="Liu D."/>
            <person name="Zhang X."/>
            <person name="Ji Z."/>
            <person name="Zhao W."/>
            <person name="Sun Y."/>
            <person name="Zhang Z."/>
            <person name="Bao J."/>
            <person name="Han Y."/>
            <person name="Dong L."/>
            <person name="Ji J."/>
            <person name="Chen P."/>
            <person name="Wu S."/>
            <person name="Liu J."/>
            <person name="Xiao Y."/>
            <person name="Bu D."/>
            <person name="Tan J."/>
            <person name="Yang L."/>
            <person name="Ye C."/>
            <person name="Zhang J."/>
            <person name="Xu J."/>
            <person name="Zhou Y."/>
            <person name="Yu Y."/>
            <person name="Zhang B."/>
            <person name="Zhuang S."/>
            <person name="Wei H."/>
            <person name="Liu B."/>
            <person name="Lei M."/>
            <person name="Yu H."/>
            <person name="Li Y."/>
            <person name="Xu H."/>
            <person name="Wei S."/>
            <person name="He X."/>
            <person name="Fang L."/>
            <person name="Zhang Z."/>
            <person name="Zhang Y."/>
            <person name="Huang X."/>
            <person name="Su Z."/>
            <person name="Tong W."/>
            <person name="Li J."/>
            <person name="Tong Z."/>
            <person name="Li S."/>
            <person name="Ye J."/>
            <person name="Wang L."/>
            <person name="Fang L."/>
            <person name="Lei T."/>
            <person name="Chen C.-S."/>
            <person name="Chen H.-C."/>
            <person name="Xu Z."/>
            <person name="Li H."/>
            <person name="Huang H."/>
            <person name="Zhang F."/>
            <person name="Xu H."/>
            <person name="Li N."/>
            <person name="Zhao C."/>
            <person name="Li S."/>
            <person name="Dong L."/>
            <person name="Huang Y."/>
            <person name="Li L."/>
            <person name="Xi Y."/>
            <person name="Qi Q."/>
            <person name="Li W."/>
            <person name="Zhang B."/>
            <person name="Hu W."/>
            <person name="Zhang Y."/>
            <person name="Tian X."/>
            <person name="Jiao Y."/>
            <person name="Liang X."/>
            <person name="Jin J."/>
            <person name="Gao L."/>
            <person name="Zheng W."/>
            <person name="Hao B."/>
            <person name="Liu S.-M."/>
            <person name="Wang W."/>
            <person name="Yuan L."/>
            <person name="Cao M."/>
            <person name="McDermott J."/>
            <person name="Samudrala R."/>
            <person name="Wang J."/>
            <person name="Wong G.K.-S."/>
            <person name="Yang H."/>
        </authorList>
    </citation>
    <scope>NUCLEOTIDE SEQUENCE [LARGE SCALE GENOMIC DNA]</scope>
    <source>
        <strain>cv. Nipponbare</strain>
    </source>
</reference>
<reference key="6">
    <citation type="journal article" date="2004" name="Plant Cell Physiol.">
        <title>Whole genome analysis of the OsGRF gene family encoding plant-specific putative transcription activators in rice (Oryza sativa L.).</title>
        <authorList>
            <person name="Choi D."/>
            <person name="Kim J.H."/>
            <person name="Kende H."/>
        </authorList>
    </citation>
    <scope>IDENTIFICATION</scope>
    <scope>GENE FAMILY</scope>
    <source>
        <strain>cv. Nipponbare</strain>
    </source>
</reference>
<name>GRF3_ORYSJ</name>
<gene>
    <name type="primary">GRF3</name>
    <name type="ordered locus">Os04g0600900</name>
    <name type="ordered locus">LOC_Os04g51190</name>
    <name type="ORF">OsJ_16036</name>
    <name type="ORF">OSJNBa0083N12.16</name>
</gene>
<organism>
    <name type="scientific">Oryza sativa subsp. japonica</name>
    <name type="common">Rice</name>
    <dbReference type="NCBI Taxonomy" id="39947"/>
    <lineage>
        <taxon>Eukaryota</taxon>
        <taxon>Viridiplantae</taxon>
        <taxon>Streptophyta</taxon>
        <taxon>Embryophyta</taxon>
        <taxon>Tracheophyta</taxon>
        <taxon>Spermatophyta</taxon>
        <taxon>Magnoliopsida</taxon>
        <taxon>Liliopsida</taxon>
        <taxon>Poales</taxon>
        <taxon>Poaceae</taxon>
        <taxon>BOP clade</taxon>
        <taxon>Oryzoideae</taxon>
        <taxon>Oryzeae</taxon>
        <taxon>Oryzinae</taxon>
        <taxon>Oryza</taxon>
        <taxon>Oryza sativa</taxon>
    </lineage>
</organism>
<comment type="function">
    <text evidence="1">Transcription activator that plays a regulatory role in gibberellin-induced stem elongation.</text>
</comment>
<comment type="subcellular location">
    <subcellularLocation>
        <location evidence="3">Nucleus</location>
    </subcellularLocation>
</comment>
<comment type="domain">
    <text>The QLQ domain and WRC domain may be involved in protein-protein interaction and DNA-binding, respectively.</text>
</comment>
<comment type="similarity">
    <text evidence="5">Belongs to the GRF family.</text>
</comment>
<comment type="sequence caution" evidence="5">
    <conflict type="erroneous gene model prediction">
        <sequence resource="EMBL-CDS" id="BAF15677"/>
    </conflict>
</comment>
<comment type="sequence caution" evidence="5">
    <conflict type="erroneous gene model prediction">
        <sequence resource="EMBL-CDS" id="DAA05207"/>
    </conflict>
</comment>
<dbReference type="EMBL" id="AL606683">
    <property type="protein sequence ID" value="CAD41819.2"/>
    <property type="molecule type" value="Genomic_DNA"/>
</dbReference>
<dbReference type="EMBL" id="AP008210">
    <property type="protein sequence ID" value="BAF15677.2"/>
    <property type="status" value="ALT_SEQ"/>
    <property type="molecule type" value="Genomic_DNA"/>
</dbReference>
<dbReference type="EMBL" id="AP014960">
    <property type="status" value="NOT_ANNOTATED_CDS"/>
    <property type="molecule type" value="Genomic_DNA"/>
</dbReference>
<dbReference type="EMBL" id="CM000141">
    <property type="protein sequence ID" value="EEE61616.1"/>
    <property type="molecule type" value="Genomic_DNA"/>
</dbReference>
<dbReference type="EMBL" id="BK004858">
    <property type="protein sequence ID" value="DAA05207.1"/>
    <property type="status" value="ALT_SEQ"/>
    <property type="molecule type" value="Genomic_DNA"/>
</dbReference>
<dbReference type="RefSeq" id="XP_015634332.1">
    <property type="nucleotide sequence ID" value="XM_015778846.1"/>
</dbReference>
<dbReference type="RefSeq" id="XP_015634333.1">
    <property type="nucleotide sequence ID" value="XM_015778847.1"/>
</dbReference>
<dbReference type="FunCoup" id="Q6AWY6">
    <property type="interactions" value="13"/>
</dbReference>
<dbReference type="PaxDb" id="39947-Q6AWY6"/>
<dbReference type="KEGG" id="dosa:Os04g0600900"/>
<dbReference type="eggNOG" id="ENOG502QSFK">
    <property type="taxonomic scope" value="Eukaryota"/>
</dbReference>
<dbReference type="HOGENOM" id="CLU_037908_0_0_1"/>
<dbReference type="InParanoid" id="Q6AWY6"/>
<dbReference type="OrthoDB" id="1927209at2759"/>
<dbReference type="Proteomes" id="UP000000763">
    <property type="component" value="Chromosome 4"/>
</dbReference>
<dbReference type="Proteomes" id="UP000007752">
    <property type="component" value="Chromosome 4"/>
</dbReference>
<dbReference type="Proteomes" id="UP000059680">
    <property type="component" value="Chromosome 4"/>
</dbReference>
<dbReference type="GO" id="GO:0005634">
    <property type="term" value="C:nucleus"/>
    <property type="evidence" value="ECO:0007669"/>
    <property type="project" value="UniProtKB-SubCell"/>
</dbReference>
<dbReference type="GO" id="GO:0005524">
    <property type="term" value="F:ATP binding"/>
    <property type="evidence" value="ECO:0007669"/>
    <property type="project" value="InterPro"/>
</dbReference>
<dbReference type="GO" id="GO:0032502">
    <property type="term" value="P:developmental process"/>
    <property type="evidence" value="ECO:0007669"/>
    <property type="project" value="InterPro"/>
</dbReference>
<dbReference type="GO" id="GO:0006351">
    <property type="term" value="P:DNA-templated transcription"/>
    <property type="evidence" value="ECO:0007669"/>
    <property type="project" value="InterPro"/>
</dbReference>
<dbReference type="GO" id="GO:0006355">
    <property type="term" value="P:regulation of DNA-templated transcription"/>
    <property type="evidence" value="ECO:0007669"/>
    <property type="project" value="InterPro"/>
</dbReference>
<dbReference type="InterPro" id="IPR014978">
    <property type="entry name" value="Gln-Leu-Gln_QLQ"/>
</dbReference>
<dbReference type="InterPro" id="IPR031137">
    <property type="entry name" value="GRF"/>
</dbReference>
<dbReference type="InterPro" id="IPR014977">
    <property type="entry name" value="WRC_dom"/>
</dbReference>
<dbReference type="PANTHER" id="PTHR31602:SF113">
    <property type="entry name" value="GROWTH-REGULATING FACTOR 4"/>
    <property type="match status" value="1"/>
</dbReference>
<dbReference type="PANTHER" id="PTHR31602">
    <property type="entry name" value="GROWTH-REGULATING FACTOR 5"/>
    <property type="match status" value="1"/>
</dbReference>
<dbReference type="Pfam" id="PF08880">
    <property type="entry name" value="QLQ"/>
    <property type="match status" value="1"/>
</dbReference>
<dbReference type="Pfam" id="PF08879">
    <property type="entry name" value="WRC"/>
    <property type="match status" value="1"/>
</dbReference>
<dbReference type="SMART" id="SM00951">
    <property type="entry name" value="QLQ"/>
    <property type="match status" value="1"/>
</dbReference>
<dbReference type="PROSITE" id="PS51666">
    <property type="entry name" value="QLQ"/>
    <property type="match status" value="1"/>
</dbReference>
<dbReference type="PROSITE" id="PS51667">
    <property type="entry name" value="WRC"/>
    <property type="match status" value="1"/>
</dbReference>
<evidence type="ECO:0000250" key="1"/>
<evidence type="ECO:0000255" key="2">
    <source>
        <dbReference type="PROSITE-ProRule" id="PRU01001"/>
    </source>
</evidence>
<evidence type="ECO:0000255" key="3">
    <source>
        <dbReference type="PROSITE-ProRule" id="PRU01002"/>
    </source>
</evidence>
<evidence type="ECO:0000256" key="4">
    <source>
        <dbReference type="SAM" id="MobiDB-lite"/>
    </source>
</evidence>
<evidence type="ECO:0000305" key="5"/>
<proteinExistence type="inferred from homology"/>
<feature type="chain" id="PRO_0000419304" description="Growth-regulating factor 3">
    <location>
        <begin position="1"/>
        <end position="387"/>
    </location>
</feature>
<feature type="domain" description="QLQ" evidence="2">
    <location>
        <begin position="53"/>
        <end position="88"/>
    </location>
</feature>
<feature type="domain" description="WRC" evidence="3">
    <location>
        <begin position="114"/>
        <end position="158"/>
    </location>
</feature>
<feature type="region of interest" description="Disordered" evidence="4">
    <location>
        <begin position="145"/>
        <end position="176"/>
    </location>
</feature>
<feature type="short sequence motif" description="Bipartite nuclear localization signal" evidence="3">
    <location>
        <begin position="111"/>
        <end position="129"/>
    </location>
</feature>
<feature type="short sequence motif" description="Bipartite nuclear localization signal" evidence="3">
    <location>
        <begin position="147"/>
        <end position="154"/>
    </location>
</feature>
<sequence>MAMPFASLSPAADHRPSFIFPFCRSSPLSAVGEEAQQHMMGARWAAAVARPPPFTAAQYEELEQQALIYKYLVAGVPVPADLLLPIRRGLDSLASRFYHHPVLGYGSYFGKKLDPEPGRCRRTDGKKWRCSKEAAPDSKYCERHMHRGRNRSRKPVEAQLVAPHSQPPATAPAAAVTSTAFQNHSLYPAIANGGGANGGGGGGGGGGSAPGSFALGSNTQLHMDNAASYSTVAAGAGNKDFRYSAYGVRPLADEHSPLITGAMDTSIDNSWCLLPSQTSTFSVSSYPMLGNLSELDQNTICSLPKVEREPLSFFGSDYVTVDSGKQENQTLRPFFDEWPKARDSWPDLADDNSLATFSATQLSISIPMATSDFSTTSSRSHNGIYSR</sequence>